<organism>
    <name type="scientific">Mus musculus</name>
    <name type="common">Mouse</name>
    <dbReference type="NCBI Taxonomy" id="10090"/>
    <lineage>
        <taxon>Eukaryota</taxon>
        <taxon>Metazoa</taxon>
        <taxon>Chordata</taxon>
        <taxon>Craniata</taxon>
        <taxon>Vertebrata</taxon>
        <taxon>Euteleostomi</taxon>
        <taxon>Mammalia</taxon>
        <taxon>Eutheria</taxon>
        <taxon>Euarchontoglires</taxon>
        <taxon>Glires</taxon>
        <taxon>Rodentia</taxon>
        <taxon>Myomorpha</taxon>
        <taxon>Muroidea</taxon>
        <taxon>Muridae</taxon>
        <taxon>Murinae</taxon>
        <taxon>Mus</taxon>
        <taxon>Mus</taxon>
    </lineage>
</organism>
<dbReference type="EMBL" id="AK141272">
    <property type="protein sequence ID" value="BAE24628.1"/>
    <property type="molecule type" value="mRNA"/>
</dbReference>
<dbReference type="CCDS" id="CCDS35876.1"/>
<dbReference type="RefSeq" id="NP_001103217.1">
    <property type="nucleotide sequence ID" value="NM_001109747.1"/>
</dbReference>
<dbReference type="SMR" id="Q3URR0"/>
<dbReference type="ComplexPortal" id="CPX-5704">
    <property type="entry name" value="Kinetochore CCAN complex"/>
</dbReference>
<dbReference type="FunCoup" id="Q3URR0">
    <property type="interactions" value="866"/>
</dbReference>
<dbReference type="STRING" id="10090.ENSMUSP00000097565"/>
<dbReference type="PhosphoSitePlus" id="Q3URR0"/>
<dbReference type="PaxDb" id="10090-ENSMUSP00000097565"/>
<dbReference type="Antibodypedia" id="32744">
    <property type="antibodies" value="64 antibodies from 22 providers"/>
</dbReference>
<dbReference type="Ensembl" id="ENSMUST00000099985.6">
    <property type="protein sequence ID" value="ENSMUSP00000097565.5"/>
    <property type="gene ID" value="ENSMUSG00000075266.6"/>
</dbReference>
<dbReference type="GeneID" id="66311"/>
<dbReference type="KEGG" id="mmu:66311"/>
<dbReference type="UCSC" id="uc007etc.3">
    <property type="organism name" value="mouse"/>
</dbReference>
<dbReference type="AGR" id="MGI:1913561"/>
<dbReference type="CTD" id="387103"/>
<dbReference type="MGI" id="MGI:1913561">
    <property type="gene designation" value="Cenpw"/>
</dbReference>
<dbReference type="VEuPathDB" id="HostDB:ENSMUSG00000075266"/>
<dbReference type="eggNOG" id="ENOG502SGDW">
    <property type="taxonomic scope" value="Eukaryota"/>
</dbReference>
<dbReference type="GeneTree" id="ENSGT00390000010369"/>
<dbReference type="HOGENOM" id="CLU_178644_1_0_1"/>
<dbReference type="InParanoid" id="Q3URR0"/>
<dbReference type="OMA" id="IIKKDHV"/>
<dbReference type="OrthoDB" id="2543597at2759"/>
<dbReference type="PhylomeDB" id="Q3URR0"/>
<dbReference type="TreeFam" id="TF343285"/>
<dbReference type="Reactome" id="R-MMU-606279">
    <property type="pathway name" value="Deposition of new CENPA-containing nucleosomes at the centromere"/>
</dbReference>
<dbReference type="BioGRID-ORCS" id="66311">
    <property type="hits" value="25 hits in 77 CRISPR screens"/>
</dbReference>
<dbReference type="ChiTaRS" id="Cenpw">
    <property type="organism name" value="mouse"/>
</dbReference>
<dbReference type="PRO" id="PR:Q3URR0"/>
<dbReference type="Proteomes" id="UP000000589">
    <property type="component" value="Chromosome 10"/>
</dbReference>
<dbReference type="RNAct" id="Q3URR0">
    <property type="molecule type" value="protein"/>
</dbReference>
<dbReference type="Bgee" id="ENSMUSG00000075266">
    <property type="expression patterns" value="Expressed in yolk sac and 179 other cell types or tissues"/>
</dbReference>
<dbReference type="ExpressionAtlas" id="Q3URR0">
    <property type="expression patterns" value="baseline and differential"/>
</dbReference>
<dbReference type="GO" id="GO:0000775">
    <property type="term" value="C:chromosome, centromeric region"/>
    <property type="evidence" value="ECO:0000250"/>
    <property type="project" value="UniProtKB"/>
</dbReference>
<dbReference type="GO" id="GO:0000939">
    <property type="term" value="C:inner kinetochore"/>
    <property type="evidence" value="ECO:0000266"/>
    <property type="project" value="ComplexPortal"/>
</dbReference>
<dbReference type="GO" id="GO:0000776">
    <property type="term" value="C:kinetochore"/>
    <property type="evidence" value="ECO:0000250"/>
    <property type="project" value="UniProtKB"/>
</dbReference>
<dbReference type="GO" id="GO:0016363">
    <property type="term" value="C:nuclear matrix"/>
    <property type="evidence" value="ECO:0007669"/>
    <property type="project" value="UniProtKB-SubCell"/>
</dbReference>
<dbReference type="GO" id="GO:0005730">
    <property type="term" value="C:nucleolus"/>
    <property type="evidence" value="ECO:0007669"/>
    <property type="project" value="UniProtKB-SubCell"/>
</dbReference>
<dbReference type="GO" id="GO:0005654">
    <property type="term" value="C:nucleoplasm"/>
    <property type="evidence" value="ECO:0007669"/>
    <property type="project" value="Ensembl"/>
</dbReference>
<dbReference type="GO" id="GO:0005634">
    <property type="term" value="C:nucleus"/>
    <property type="evidence" value="ECO:0000303"/>
    <property type="project" value="ComplexPortal"/>
</dbReference>
<dbReference type="GO" id="GO:0003677">
    <property type="term" value="F:DNA binding"/>
    <property type="evidence" value="ECO:0007669"/>
    <property type="project" value="UniProtKB-KW"/>
</dbReference>
<dbReference type="GO" id="GO:0046982">
    <property type="term" value="F:protein heterodimerization activity"/>
    <property type="evidence" value="ECO:0007669"/>
    <property type="project" value="InterPro"/>
</dbReference>
<dbReference type="GO" id="GO:0051301">
    <property type="term" value="P:cell division"/>
    <property type="evidence" value="ECO:0007669"/>
    <property type="project" value="UniProtKB-KW"/>
</dbReference>
<dbReference type="GO" id="GO:0051276">
    <property type="term" value="P:chromosome organization"/>
    <property type="evidence" value="ECO:0000250"/>
    <property type="project" value="UniProtKB"/>
</dbReference>
<dbReference type="GO" id="GO:0007059">
    <property type="term" value="P:chromosome segregation"/>
    <property type="evidence" value="ECO:0000250"/>
    <property type="project" value="UniProtKB"/>
</dbReference>
<dbReference type="GO" id="GO:0051382">
    <property type="term" value="P:kinetochore assembly"/>
    <property type="evidence" value="ECO:0000250"/>
    <property type="project" value="UniProtKB"/>
</dbReference>
<dbReference type="GO" id="GO:0000278">
    <property type="term" value="P:mitotic cell cycle"/>
    <property type="evidence" value="ECO:0000250"/>
    <property type="project" value="UniProtKB"/>
</dbReference>
<dbReference type="CDD" id="cd13732">
    <property type="entry name" value="HFD_CENP-W"/>
    <property type="match status" value="1"/>
</dbReference>
<dbReference type="FunFam" id="1.10.20.10:FF:000053">
    <property type="entry name" value="Centromere protein W"/>
    <property type="match status" value="1"/>
</dbReference>
<dbReference type="Gene3D" id="1.10.20.10">
    <property type="entry name" value="Histone, subunit A"/>
    <property type="match status" value="1"/>
</dbReference>
<dbReference type="InterPro" id="IPR028847">
    <property type="entry name" value="CENP-W"/>
</dbReference>
<dbReference type="InterPro" id="IPR052484">
    <property type="entry name" value="CENP-W/WIP1"/>
</dbReference>
<dbReference type="InterPro" id="IPR009072">
    <property type="entry name" value="Histone-fold"/>
</dbReference>
<dbReference type="PANTHER" id="PTHR34832">
    <property type="entry name" value="CENTROMERE PROTEIN W"/>
    <property type="match status" value="1"/>
</dbReference>
<dbReference type="PANTHER" id="PTHR34832:SF1">
    <property type="entry name" value="CENTROMERE PROTEIN W"/>
    <property type="match status" value="1"/>
</dbReference>
<dbReference type="Pfam" id="PF15510">
    <property type="entry name" value="CENP-W"/>
    <property type="match status" value="1"/>
</dbReference>
<dbReference type="SUPFAM" id="SSF47113">
    <property type="entry name" value="Histone-fold"/>
    <property type="match status" value="1"/>
</dbReference>
<name>CENPW_MOUSE</name>
<feature type="chain" id="PRO_0000311184" description="Centromere protein W">
    <location>
        <begin position="1"/>
        <end position="86"/>
    </location>
</feature>
<sequence length="86" mass="9734">MAPSTTVTRRVKRKAPRAFLKRTLKQKKPHLGLGRCCDLLIHLNCLLFIQRLAEESRTNACESKSRVIKKDHVLAAGKVILKKSRG</sequence>
<keyword id="KW-0131">Cell cycle</keyword>
<keyword id="KW-0132">Cell division</keyword>
<keyword id="KW-0137">Centromere</keyword>
<keyword id="KW-0158">Chromosome</keyword>
<keyword id="KW-0238">DNA-binding</keyword>
<keyword id="KW-0995">Kinetochore</keyword>
<keyword id="KW-0498">Mitosis</keyword>
<keyword id="KW-0539">Nucleus</keyword>
<keyword id="KW-1185">Reference proteome</keyword>
<keyword id="KW-0043">Tumor suppressor</keyword>
<reference key="1">
    <citation type="journal article" date="2005" name="Science">
        <title>The transcriptional landscape of the mammalian genome.</title>
        <authorList>
            <person name="Carninci P."/>
            <person name="Kasukawa T."/>
            <person name="Katayama S."/>
            <person name="Gough J."/>
            <person name="Frith M.C."/>
            <person name="Maeda N."/>
            <person name="Oyama R."/>
            <person name="Ravasi T."/>
            <person name="Lenhard B."/>
            <person name="Wells C."/>
            <person name="Kodzius R."/>
            <person name="Shimokawa K."/>
            <person name="Bajic V.B."/>
            <person name="Brenner S.E."/>
            <person name="Batalov S."/>
            <person name="Forrest A.R."/>
            <person name="Zavolan M."/>
            <person name="Davis M.J."/>
            <person name="Wilming L.G."/>
            <person name="Aidinis V."/>
            <person name="Allen J.E."/>
            <person name="Ambesi-Impiombato A."/>
            <person name="Apweiler R."/>
            <person name="Aturaliya R.N."/>
            <person name="Bailey T.L."/>
            <person name="Bansal M."/>
            <person name="Baxter L."/>
            <person name="Beisel K.W."/>
            <person name="Bersano T."/>
            <person name="Bono H."/>
            <person name="Chalk A.M."/>
            <person name="Chiu K.P."/>
            <person name="Choudhary V."/>
            <person name="Christoffels A."/>
            <person name="Clutterbuck D.R."/>
            <person name="Crowe M.L."/>
            <person name="Dalla E."/>
            <person name="Dalrymple B.P."/>
            <person name="de Bono B."/>
            <person name="Della Gatta G."/>
            <person name="di Bernardo D."/>
            <person name="Down T."/>
            <person name="Engstrom P."/>
            <person name="Fagiolini M."/>
            <person name="Faulkner G."/>
            <person name="Fletcher C.F."/>
            <person name="Fukushima T."/>
            <person name="Furuno M."/>
            <person name="Futaki S."/>
            <person name="Gariboldi M."/>
            <person name="Georgii-Hemming P."/>
            <person name="Gingeras T.R."/>
            <person name="Gojobori T."/>
            <person name="Green R.E."/>
            <person name="Gustincich S."/>
            <person name="Harbers M."/>
            <person name="Hayashi Y."/>
            <person name="Hensch T.K."/>
            <person name="Hirokawa N."/>
            <person name="Hill D."/>
            <person name="Huminiecki L."/>
            <person name="Iacono M."/>
            <person name="Ikeo K."/>
            <person name="Iwama A."/>
            <person name="Ishikawa T."/>
            <person name="Jakt M."/>
            <person name="Kanapin A."/>
            <person name="Katoh M."/>
            <person name="Kawasawa Y."/>
            <person name="Kelso J."/>
            <person name="Kitamura H."/>
            <person name="Kitano H."/>
            <person name="Kollias G."/>
            <person name="Krishnan S.P."/>
            <person name="Kruger A."/>
            <person name="Kummerfeld S.K."/>
            <person name="Kurochkin I.V."/>
            <person name="Lareau L.F."/>
            <person name="Lazarevic D."/>
            <person name="Lipovich L."/>
            <person name="Liu J."/>
            <person name="Liuni S."/>
            <person name="McWilliam S."/>
            <person name="Madan Babu M."/>
            <person name="Madera M."/>
            <person name="Marchionni L."/>
            <person name="Matsuda H."/>
            <person name="Matsuzawa S."/>
            <person name="Miki H."/>
            <person name="Mignone F."/>
            <person name="Miyake S."/>
            <person name="Morris K."/>
            <person name="Mottagui-Tabar S."/>
            <person name="Mulder N."/>
            <person name="Nakano N."/>
            <person name="Nakauchi H."/>
            <person name="Ng P."/>
            <person name="Nilsson R."/>
            <person name="Nishiguchi S."/>
            <person name="Nishikawa S."/>
            <person name="Nori F."/>
            <person name="Ohara O."/>
            <person name="Okazaki Y."/>
            <person name="Orlando V."/>
            <person name="Pang K.C."/>
            <person name="Pavan W.J."/>
            <person name="Pavesi G."/>
            <person name="Pesole G."/>
            <person name="Petrovsky N."/>
            <person name="Piazza S."/>
            <person name="Reed J."/>
            <person name="Reid J.F."/>
            <person name="Ring B.Z."/>
            <person name="Ringwald M."/>
            <person name="Rost B."/>
            <person name="Ruan Y."/>
            <person name="Salzberg S.L."/>
            <person name="Sandelin A."/>
            <person name="Schneider C."/>
            <person name="Schoenbach C."/>
            <person name="Sekiguchi K."/>
            <person name="Semple C.A."/>
            <person name="Seno S."/>
            <person name="Sessa L."/>
            <person name="Sheng Y."/>
            <person name="Shibata Y."/>
            <person name="Shimada H."/>
            <person name="Shimada K."/>
            <person name="Silva D."/>
            <person name="Sinclair B."/>
            <person name="Sperling S."/>
            <person name="Stupka E."/>
            <person name="Sugiura K."/>
            <person name="Sultana R."/>
            <person name="Takenaka Y."/>
            <person name="Taki K."/>
            <person name="Tammoja K."/>
            <person name="Tan S.L."/>
            <person name="Tang S."/>
            <person name="Taylor M.S."/>
            <person name="Tegner J."/>
            <person name="Teichmann S.A."/>
            <person name="Ueda H.R."/>
            <person name="van Nimwegen E."/>
            <person name="Verardo R."/>
            <person name="Wei C.L."/>
            <person name="Yagi K."/>
            <person name="Yamanishi H."/>
            <person name="Zabarovsky E."/>
            <person name="Zhu S."/>
            <person name="Zimmer A."/>
            <person name="Hide W."/>
            <person name="Bult C."/>
            <person name="Grimmond S.M."/>
            <person name="Teasdale R.D."/>
            <person name="Liu E.T."/>
            <person name="Brusic V."/>
            <person name="Quackenbush J."/>
            <person name="Wahlestedt C."/>
            <person name="Mattick J.S."/>
            <person name="Hume D.A."/>
            <person name="Kai C."/>
            <person name="Sasaki D."/>
            <person name="Tomaru Y."/>
            <person name="Fukuda S."/>
            <person name="Kanamori-Katayama M."/>
            <person name="Suzuki M."/>
            <person name="Aoki J."/>
            <person name="Arakawa T."/>
            <person name="Iida J."/>
            <person name="Imamura K."/>
            <person name="Itoh M."/>
            <person name="Kato T."/>
            <person name="Kawaji H."/>
            <person name="Kawagashira N."/>
            <person name="Kawashima T."/>
            <person name="Kojima M."/>
            <person name="Kondo S."/>
            <person name="Konno H."/>
            <person name="Nakano K."/>
            <person name="Ninomiya N."/>
            <person name="Nishio T."/>
            <person name="Okada M."/>
            <person name="Plessy C."/>
            <person name="Shibata K."/>
            <person name="Shiraki T."/>
            <person name="Suzuki S."/>
            <person name="Tagami M."/>
            <person name="Waki K."/>
            <person name="Watahiki A."/>
            <person name="Okamura-Oho Y."/>
            <person name="Suzuki H."/>
            <person name="Kawai J."/>
            <person name="Hayashizaki Y."/>
        </authorList>
    </citation>
    <scope>NUCLEOTIDE SEQUENCE [LARGE SCALE MRNA]</scope>
    <source>
        <strain>C57BL/6J</strain>
    </source>
</reference>
<reference key="2">
    <citation type="journal article" date="2007" name="Biochem. Biophys. Res. Commun.">
        <title>Molecular cloning and functional analysis of a novel oncogene, cancer-upregulated gene 2 (CUG2).</title>
        <authorList>
            <person name="Lee S."/>
            <person name="Gang J."/>
            <person name="Jeon S.B."/>
            <person name="Choo S.H."/>
            <person name="Lee B."/>
            <person name="Kim Y.-G."/>
            <person name="Lee Y.S."/>
            <person name="Jung J."/>
            <person name="Song S.Y."/>
            <person name="Koh S.S."/>
        </authorList>
    </citation>
    <scope>FUNCTION</scope>
</reference>
<evidence type="ECO:0000250" key="1"/>
<evidence type="ECO:0000250" key="2">
    <source>
        <dbReference type="UniProtKB" id="P0DJH6"/>
    </source>
</evidence>
<evidence type="ECO:0000250" key="3">
    <source>
        <dbReference type="UniProtKB" id="Q5EE01"/>
    </source>
</evidence>
<evidence type="ECO:0000269" key="4">
    <source>
    </source>
</evidence>
<evidence type="ECO:0000305" key="5"/>
<protein>
    <recommendedName>
        <fullName>Centromere protein W</fullName>
        <shortName>CENP-W</shortName>
    </recommendedName>
    <alternativeName>
        <fullName>Cancer-up-regulated gene 2 protein</fullName>
    </alternativeName>
</protein>
<accession>Q3URR0</accession>
<gene>
    <name type="primary">Cenpw</name>
    <name type="synonym">Cug2</name>
</gene>
<proteinExistence type="inferred from homology"/>
<comment type="function">
    <text evidence="1 4">Component of the CENPA-NAC (nucleosome-associated) complex, a complex that plays a central role in assembly of kinetochore proteins, mitotic progression and chromosome segregation (By similarity). The CENPA-NAC complex recruits the CENPA-CAD (nucleosome distal) complex and may be involved in incorporation of newly synthesized CENPA into centromeres (By similarity). Part of a nucleosome-associated complex that binds specifically to histone H3-containing nucleosomes at the centromere, as opposed to nucleosomes containing CENPA. Component of the heterotetrameric CENP-T-W-S-X complex that binds and supercoils DNA, and plays an important role in kinetochore assembly. CENPW has a fundamental role in kinetochore assembly and function. It is one of the inner kinetochore proteins, with most further proteins binding downstream. Required for normal chromosome organization and normal progress through mitosis (By similarity).</text>
</comment>
<comment type="subunit">
    <text evidence="3">Heterodimer with CENPT; this dimer coassembles with CENPS-CENPX heterodimers at centromeres to form the tetrameric CENP-T-W-S-X complex, which is a subcomplex of the large constitutive centromere-associated network (CCAN, also known as the interphase centromere complex or ICEN). Interacts with NPM1.</text>
</comment>
<comment type="subcellular location">
    <subcellularLocation>
        <location evidence="3">Nucleus</location>
    </subcellularLocation>
    <subcellularLocation>
        <location evidence="3">Chromosome</location>
        <location evidence="3">Centromere</location>
    </subcellularLocation>
    <subcellularLocation>
        <location evidence="3">Chromosome</location>
        <location evidence="3">Centromere</location>
        <location evidence="3">Kinetochore</location>
    </subcellularLocation>
    <subcellularLocation>
        <location evidence="3">Nucleus matrix</location>
    </subcellularLocation>
    <subcellularLocation>
        <location evidence="3">Nucleus</location>
        <location evidence="3">Nucleolus</location>
    </subcellularLocation>
    <text evidence="2">Constitutively localizes to centromeres throughout the cell cycle, and to the inner kinetochore during mitosis.</text>
</comment>
<comment type="similarity">
    <text evidence="5">Belongs to the CENP-W/WIP1 family.</text>
</comment>